<protein>
    <recommendedName>
        <fullName evidence="1">Serine--tRNA ligase</fullName>
        <ecNumber evidence="1">6.1.1.11</ecNumber>
    </recommendedName>
    <alternativeName>
        <fullName evidence="1">Seryl-tRNA synthetase</fullName>
        <shortName evidence="1">SerRS</shortName>
    </alternativeName>
    <alternativeName>
        <fullName evidence="1">Seryl-tRNA(Ser/Sec) synthetase</fullName>
    </alternativeName>
</protein>
<gene>
    <name evidence="1" type="primary">serS</name>
    <name type="ordered locus">BamMC406_0851</name>
</gene>
<reference key="1">
    <citation type="submission" date="2008-04" db="EMBL/GenBank/DDBJ databases">
        <title>Complete sequence of chromosome 1 of Burkholderia ambifaria MC40-6.</title>
        <authorList>
            <person name="Copeland A."/>
            <person name="Lucas S."/>
            <person name="Lapidus A."/>
            <person name="Glavina del Rio T."/>
            <person name="Dalin E."/>
            <person name="Tice H."/>
            <person name="Pitluck S."/>
            <person name="Chain P."/>
            <person name="Malfatti S."/>
            <person name="Shin M."/>
            <person name="Vergez L."/>
            <person name="Lang D."/>
            <person name="Schmutz J."/>
            <person name="Larimer F."/>
            <person name="Land M."/>
            <person name="Hauser L."/>
            <person name="Kyrpides N."/>
            <person name="Lykidis A."/>
            <person name="Ramette A."/>
            <person name="Konstantinidis K."/>
            <person name="Tiedje J."/>
            <person name="Richardson P."/>
        </authorList>
    </citation>
    <scope>NUCLEOTIDE SEQUENCE [LARGE SCALE GENOMIC DNA]</scope>
    <source>
        <strain>MC40-6</strain>
    </source>
</reference>
<dbReference type="EC" id="6.1.1.11" evidence="1"/>
<dbReference type="EMBL" id="CP001025">
    <property type="protein sequence ID" value="ACB63342.1"/>
    <property type="molecule type" value="Genomic_DNA"/>
</dbReference>
<dbReference type="RefSeq" id="WP_012363289.1">
    <property type="nucleotide sequence ID" value="NC_010551.1"/>
</dbReference>
<dbReference type="SMR" id="B1YUL5"/>
<dbReference type="KEGG" id="bac:BamMC406_0851"/>
<dbReference type="HOGENOM" id="CLU_023797_1_1_4"/>
<dbReference type="OrthoDB" id="9804647at2"/>
<dbReference type="UniPathway" id="UPA00906">
    <property type="reaction ID" value="UER00895"/>
</dbReference>
<dbReference type="Proteomes" id="UP000001680">
    <property type="component" value="Chromosome 1"/>
</dbReference>
<dbReference type="GO" id="GO:0005737">
    <property type="term" value="C:cytoplasm"/>
    <property type="evidence" value="ECO:0007669"/>
    <property type="project" value="UniProtKB-SubCell"/>
</dbReference>
<dbReference type="GO" id="GO:0005524">
    <property type="term" value="F:ATP binding"/>
    <property type="evidence" value="ECO:0007669"/>
    <property type="project" value="UniProtKB-UniRule"/>
</dbReference>
<dbReference type="GO" id="GO:0004828">
    <property type="term" value="F:serine-tRNA ligase activity"/>
    <property type="evidence" value="ECO:0007669"/>
    <property type="project" value="UniProtKB-UniRule"/>
</dbReference>
<dbReference type="GO" id="GO:0016260">
    <property type="term" value="P:selenocysteine biosynthetic process"/>
    <property type="evidence" value="ECO:0007669"/>
    <property type="project" value="UniProtKB-UniRule"/>
</dbReference>
<dbReference type="GO" id="GO:0006434">
    <property type="term" value="P:seryl-tRNA aminoacylation"/>
    <property type="evidence" value="ECO:0007669"/>
    <property type="project" value="UniProtKB-UniRule"/>
</dbReference>
<dbReference type="CDD" id="cd00770">
    <property type="entry name" value="SerRS_core"/>
    <property type="match status" value="1"/>
</dbReference>
<dbReference type="Gene3D" id="3.30.930.10">
    <property type="entry name" value="Bira Bifunctional Protein, Domain 2"/>
    <property type="match status" value="1"/>
</dbReference>
<dbReference type="Gene3D" id="1.10.287.40">
    <property type="entry name" value="Serine-tRNA synthetase, tRNA binding domain"/>
    <property type="match status" value="1"/>
</dbReference>
<dbReference type="HAMAP" id="MF_00176">
    <property type="entry name" value="Ser_tRNA_synth_type1"/>
    <property type="match status" value="1"/>
</dbReference>
<dbReference type="InterPro" id="IPR002314">
    <property type="entry name" value="aa-tRNA-synt_IIb"/>
</dbReference>
<dbReference type="InterPro" id="IPR006195">
    <property type="entry name" value="aa-tRNA-synth_II"/>
</dbReference>
<dbReference type="InterPro" id="IPR045864">
    <property type="entry name" value="aa-tRNA-synth_II/BPL/LPL"/>
</dbReference>
<dbReference type="InterPro" id="IPR002317">
    <property type="entry name" value="Ser-tRNA-ligase_type_1"/>
</dbReference>
<dbReference type="InterPro" id="IPR015866">
    <property type="entry name" value="Ser-tRNA-synth_1_N"/>
</dbReference>
<dbReference type="InterPro" id="IPR042103">
    <property type="entry name" value="SerRS_1_N_sf"/>
</dbReference>
<dbReference type="InterPro" id="IPR033729">
    <property type="entry name" value="SerRS_core"/>
</dbReference>
<dbReference type="InterPro" id="IPR010978">
    <property type="entry name" value="tRNA-bd_arm"/>
</dbReference>
<dbReference type="NCBIfam" id="TIGR00414">
    <property type="entry name" value="serS"/>
    <property type="match status" value="1"/>
</dbReference>
<dbReference type="PANTHER" id="PTHR43697:SF1">
    <property type="entry name" value="SERINE--TRNA LIGASE"/>
    <property type="match status" value="1"/>
</dbReference>
<dbReference type="PANTHER" id="PTHR43697">
    <property type="entry name" value="SERYL-TRNA SYNTHETASE"/>
    <property type="match status" value="1"/>
</dbReference>
<dbReference type="Pfam" id="PF02403">
    <property type="entry name" value="Seryl_tRNA_N"/>
    <property type="match status" value="1"/>
</dbReference>
<dbReference type="Pfam" id="PF00587">
    <property type="entry name" value="tRNA-synt_2b"/>
    <property type="match status" value="1"/>
</dbReference>
<dbReference type="PIRSF" id="PIRSF001529">
    <property type="entry name" value="Ser-tRNA-synth_IIa"/>
    <property type="match status" value="1"/>
</dbReference>
<dbReference type="PRINTS" id="PR00981">
    <property type="entry name" value="TRNASYNTHSER"/>
</dbReference>
<dbReference type="SUPFAM" id="SSF55681">
    <property type="entry name" value="Class II aaRS and biotin synthetases"/>
    <property type="match status" value="1"/>
</dbReference>
<dbReference type="SUPFAM" id="SSF46589">
    <property type="entry name" value="tRNA-binding arm"/>
    <property type="match status" value="1"/>
</dbReference>
<dbReference type="PROSITE" id="PS50862">
    <property type="entry name" value="AA_TRNA_LIGASE_II"/>
    <property type="match status" value="1"/>
</dbReference>
<accession>B1YUL5</accession>
<keyword id="KW-0030">Aminoacyl-tRNA synthetase</keyword>
<keyword id="KW-0067">ATP-binding</keyword>
<keyword id="KW-0963">Cytoplasm</keyword>
<keyword id="KW-0436">Ligase</keyword>
<keyword id="KW-0547">Nucleotide-binding</keyword>
<keyword id="KW-0648">Protein biosynthesis</keyword>
<feature type="chain" id="PRO_1000098038" description="Serine--tRNA ligase">
    <location>
        <begin position="1"/>
        <end position="433"/>
    </location>
</feature>
<feature type="binding site" evidence="1">
    <location>
        <begin position="235"/>
        <end position="237"/>
    </location>
    <ligand>
        <name>L-serine</name>
        <dbReference type="ChEBI" id="CHEBI:33384"/>
    </ligand>
</feature>
<feature type="binding site" evidence="1">
    <location>
        <begin position="266"/>
        <end position="268"/>
    </location>
    <ligand>
        <name>ATP</name>
        <dbReference type="ChEBI" id="CHEBI:30616"/>
    </ligand>
</feature>
<feature type="binding site" evidence="1">
    <location>
        <position position="289"/>
    </location>
    <ligand>
        <name>L-serine</name>
        <dbReference type="ChEBI" id="CHEBI:33384"/>
    </ligand>
</feature>
<feature type="binding site" evidence="1">
    <location>
        <begin position="353"/>
        <end position="356"/>
    </location>
    <ligand>
        <name>ATP</name>
        <dbReference type="ChEBI" id="CHEBI:30616"/>
    </ligand>
</feature>
<feature type="binding site" evidence="1">
    <location>
        <position position="388"/>
    </location>
    <ligand>
        <name>L-serine</name>
        <dbReference type="ChEBI" id="CHEBI:33384"/>
    </ligand>
</feature>
<organism>
    <name type="scientific">Burkholderia ambifaria (strain MC40-6)</name>
    <dbReference type="NCBI Taxonomy" id="398577"/>
    <lineage>
        <taxon>Bacteria</taxon>
        <taxon>Pseudomonadati</taxon>
        <taxon>Pseudomonadota</taxon>
        <taxon>Betaproteobacteria</taxon>
        <taxon>Burkholderiales</taxon>
        <taxon>Burkholderiaceae</taxon>
        <taxon>Burkholderia</taxon>
        <taxon>Burkholderia cepacia complex</taxon>
    </lineage>
</organism>
<sequence length="433" mass="47496">MLDIQLLRKDLDGVAKRLADRGYTLDVAAFSALEAERRAIQTRTEELQARRNSLSKQIGAMKGKGEDTSDVMAEVGGIGDEMKASEAKLGEIQTRLSDLMLGMPNIAHESVPVGKDEADNVEVRRWGTPREFDFAVKDHVDVGTPLGLDFETGAKLAGARFTMLRGSIARLHRALAQFMIDTHTLQHGYSETYTPYIVNPEILYGTGQLPKFADDMFRVEKGGGENTITQYLISTSEISLTNTVRDSIVEGSALPIKLTAHSPCFRSEAGSYGRDTRGMIRQHQFDKVEMVQVVAPDASYAALDEMVGHAEAILQKLGLPYRVITLCTGDMGFSAAKTFDLEVWLPAQNTYREISSCSNTEAFQARRMQARFRNAQGKPELVHTLNGSGLAVGRTLVAVLENYQNADGSVTVPEALRPYMGGMERIDAPAQVS</sequence>
<comment type="function">
    <text evidence="1">Catalyzes the attachment of serine to tRNA(Ser). Is also able to aminoacylate tRNA(Sec) with serine, to form the misacylated tRNA L-seryl-tRNA(Sec), which will be further converted into selenocysteinyl-tRNA(Sec).</text>
</comment>
<comment type="catalytic activity">
    <reaction evidence="1">
        <text>tRNA(Ser) + L-serine + ATP = L-seryl-tRNA(Ser) + AMP + diphosphate + H(+)</text>
        <dbReference type="Rhea" id="RHEA:12292"/>
        <dbReference type="Rhea" id="RHEA-COMP:9669"/>
        <dbReference type="Rhea" id="RHEA-COMP:9703"/>
        <dbReference type="ChEBI" id="CHEBI:15378"/>
        <dbReference type="ChEBI" id="CHEBI:30616"/>
        <dbReference type="ChEBI" id="CHEBI:33019"/>
        <dbReference type="ChEBI" id="CHEBI:33384"/>
        <dbReference type="ChEBI" id="CHEBI:78442"/>
        <dbReference type="ChEBI" id="CHEBI:78533"/>
        <dbReference type="ChEBI" id="CHEBI:456215"/>
        <dbReference type="EC" id="6.1.1.11"/>
    </reaction>
</comment>
<comment type="catalytic activity">
    <reaction evidence="1">
        <text>tRNA(Sec) + L-serine + ATP = L-seryl-tRNA(Sec) + AMP + diphosphate + H(+)</text>
        <dbReference type="Rhea" id="RHEA:42580"/>
        <dbReference type="Rhea" id="RHEA-COMP:9742"/>
        <dbReference type="Rhea" id="RHEA-COMP:10128"/>
        <dbReference type="ChEBI" id="CHEBI:15378"/>
        <dbReference type="ChEBI" id="CHEBI:30616"/>
        <dbReference type="ChEBI" id="CHEBI:33019"/>
        <dbReference type="ChEBI" id="CHEBI:33384"/>
        <dbReference type="ChEBI" id="CHEBI:78442"/>
        <dbReference type="ChEBI" id="CHEBI:78533"/>
        <dbReference type="ChEBI" id="CHEBI:456215"/>
        <dbReference type="EC" id="6.1.1.11"/>
    </reaction>
</comment>
<comment type="pathway">
    <text evidence="1">Aminoacyl-tRNA biosynthesis; selenocysteinyl-tRNA(Sec) biosynthesis; L-seryl-tRNA(Sec) from L-serine and tRNA(Sec): step 1/1.</text>
</comment>
<comment type="subunit">
    <text evidence="1">Homodimer. The tRNA molecule binds across the dimer.</text>
</comment>
<comment type="subcellular location">
    <subcellularLocation>
        <location evidence="1">Cytoplasm</location>
    </subcellularLocation>
</comment>
<comment type="domain">
    <text evidence="1">Consists of two distinct domains, a catalytic core and a N-terminal extension that is involved in tRNA binding.</text>
</comment>
<comment type="similarity">
    <text evidence="1">Belongs to the class-II aminoacyl-tRNA synthetase family. Type-1 seryl-tRNA synthetase subfamily.</text>
</comment>
<proteinExistence type="inferred from homology"/>
<name>SYS_BURA4</name>
<evidence type="ECO:0000255" key="1">
    <source>
        <dbReference type="HAMAP-Rule" id="MF_00176"/>
    </source>
</evidence>